<name>OTSA_ECOK1</name>
<sequence length="474" mass="53542">MSRLVVVSNRIAPPDEHAASAGGLAVGILGALKAAGGLWFGWSGETGNEDQPLKKVKKGNITWASFNLSEQDLDEYYNKFSNAVLWPAFHYRLDLVQFQRPAWDGYLRVNALLADKLLPLLQDDDIIWIHDYHLLPFAHELRKRGVNNRIGFFLHIPFPTPEIFNALPTYDTLLEQLCEYDLLGFQTENDRLAFLDCLSNLTRVTTRSAKSHTACGKAFRTEVYPIGIEPKEIAKQAAGPLPPKLAQLKAELKNVQNIFSVERLDYSKGLPERFLAYEALLEKYPQHHGKIRYTQIAPTSRGDVQAYQDIRHQLENEAGRINGKYGQLGWTPLYYLNQHFDRKLLMKIFRYSDVGLVTPLRDGMNLVAKEYVAAQDPANPGVLVLSQFAGAANELTSALIVNPYDRDEVAAALDRALTMSLAERISRHAEMLDVIVKNDINHWQECFISDLKQIVPRSAESQQRDKVATFPKLA</sequence>
<dbReference type="EC" id="2.4.1.15" evidence="1"/>
<dbReference type="EMBL" id="CP000468">
    <property type="protein sequence ID" value="ABJ01243.1"/>
    <property type="status" value="ALT_INIT"/>
    <property type="molecule type" value="Genomic_DNA"/>
</dbReference>
<dbReference type="RefSeq" id="WP_001332091.1">
    <property type="nucleotide sequence ID" value="NZ_CADILS010000028.1"/>
</dbReference>
<dbReference type="SMR" id="A1AC53"/>
<dbReference type="CAZy" id="GT20">
    <property type="family name" value="Glycosyltransferase Family 20"/>
</dbReference>
<dbReference type="KEGG" id="ecv:APECO1_942"/>
<dbReference type="HOGENOM" id="CLU_002351_7_1_6"/>
<dbReference type="UniPathway" id="UPA00299"/>
<dbReference type="Proteomes" id="UP000008216">
    <property type="component" value="Chromosome"/>
</dbReference>
<dbReference type="GO" id="GO:0003825">
    <property type="term" value="F:alpha,alpha-trehalose-phosphate synthase (UDP-forming) activity"/>
    <property type="evidence" value="ECO:0007669"/>
    <property type="project" value="UniProtKB-EC"/>
</dbReference>
<dbReference type="GO" id="GO:0005992">
    <property type="term" value="P:trehalose biosynthetic process"/>
    <property type="evidence" value="ECO:0007669"/>
    <property type="project" value="UniProtKB-UniPathway"/>
</dbReference>
<dbReference type="CDD" id="cd03788">
    <property type="entry name" value="GT20_TPS"/>
    <property type="match status" value="1"/>
</dbReference>
<dbReference type="FunFam" id="3.40.50.2000:FF:000024">
    <property type="entry name" value="Trehalose-6-phosphate synthase"/>
    <property type="match status" value="1"/>
</dbReference>
<dbReference type="Gene3D" id="3.40.50.2000">
    <property type="entry name" value="Glycogen Phosphorylase B"/>
    <property type="match status" value="2"/>
</dbReference>
<dbReference type="InterPro" id="IPR001830">
    <property type="entry name" value="Glyco_trans_20"/>
</dbReference>
<dbReference type="InterPro" id="IPR012766">
    <property type="entry name" value="Trehalose_OtsA"/>
</dbReference>
<dbReference type="NCBIfam" id="NF007513">
    <property type="entry name" value="PRK10117.1"/>
    <property type="match status" value="1"/>
</dbReference>
<dbReference type="NCBIfam" id="TIGR02400">
    <property type="entry name" value="trehalose_OtsA"/>
    <property type="match status" value="1"/>
</dbReference>
<dbReference type="PANTHER" id="PTHR10788:SF106">
    <property type="entry name" value="BCDNA.GH08860"/>
    <property type="match status" value="1"/>
</dbReference>
<dbReference type="PANTHER" id="PTHR10788">
    <property type="entry name" value="TREHALOSE-6-PHOSPHATE SYNTHASE"/>
    <property type="match status" value="1"/>
</dbReference>
<dbReference type="Pfam" id="PF00982">
    <property type="entry name" value="Glyco_transf_20"/>
    <property type="match status" value="1"/>
</dbReference>
<dbReference type="SUPFAM" id="SSF53756">
    <property type="entry name" value="UDP-Glycosyltransferase/glycogen phosphorylase"/>
    <property type="match status" value="1"/>
</dbReference>
<accession>A1AC53</accession>
<comment type="function">
    <text evidence="1">Probably involved in the osmoprotection via the biosynthesis of trehalose. Catalyzes the transfer of glucose from UDP-alpha-D-glucose (UDP-Glc) to D-glucose 6-phosphate (Glc-6-P) to form trehalose-6-phosphate. Acts with retention of the anomeric configuration of the UDP-sugar donor.</text>
</comment>
<comment type="catalytic activity">
    <reaction evidence="1">
        <text>D-glucose 6-phosphate + UDP-alpha-D-glucose = alpha,alpha-trehalose 6-phosphate + UDP + H(+)</text>
        <dbReference type="Rhea" id="RHEA:18889"/>
        <dbReference type="ChEBI" id="CHEBI:15378"/>
        <dbReference type="ChEBI" id="CHEBI:58223"/>
        <dbReference type="ChEBI" id="CHEBI:58429"/>
        <dbReference type="ChEBI" id="CHEBI:58885"/>
        <dbReference type="ChEBI" id="CHEBI:61548"/>
        <dbReference type="EC" id="2.4.1.15"/>
    </reaction>
</comment>
<comment type="pathway">
    <text evidence="1">Glycan biosynthesis; trehalose biosynthesis.</text>
</comment>
<comment type="subunit">
    <text evidence="1">Homotetramer.</text>
</comment>
<comment type="similarity">
    <text evidence="1">Belongs to the glycosyltransferase 20 family.</text>
</comment>
<comment type="sequence caution" evidence="2">
    <conflict type="erroneous initiation">
        <sequence resource="EMBL-CDS" id="ABJ01243"/>
    </conflict>
</comment>
<evidence type="ECO:0000250" key="1">
    <source>
        <dbReference type="UniProtKB" id="P31677"/>
    </source>
</evidence>
<evidence type="ECO:0000305" key="2"/>
<organism>
    <name type="scientific">Escherichia coli O1:K1 / APEC</name>
    <dbReference type="NCBI Taxonomy" id="405955"/>
    <lineage>
        <taxon>Bacteria</taxon>
        <taxon>Pseudomonadati</taxon>
        <taxon>Pseudomonadota</taxon>
        <taxon>Gammaproteobacteria</taxon>
        <taxon>Enterobacterales</taxon>
        <taxon>Enterobacteriaceae</taxon>
        <taxon>Escherichia</taxon>
    </lineage>
</organism>
<keyword id="KW-0328">Glycosyltransferase</keyword>
<keyword id="KW-1185">Reference proteome</keyword>
<keyword id="KW-0808">Transferase</keyword>
<reference key="1">
    <citation type="journal article" date="2007" name="J. Bacteriol.">
        <title>The genome sequence of avian pathogenic Escherichia coli strain O1:K1:H7 shares strong similarities with human extraintestinal pathogenic E. coli genomes.</title>
        <authorList>
            <person name="Johnson T.J."/>
            <person name="Kariyawasam S."/>
            <person name="Wannemuehler Y."/>
            <person name="Mangiamele P."/>
            <person name="Johnson S.J."/>
            <person name="Doetkott C."/>
            <person name="Skyberg J.A."/>
            <person name="Lynne A.M."/>
            <person name="Johnson J.R."/>
            <person name="Nolan L.K."/>
        </authorList>
    </citation>
    <scope>NUCLEOTIDE SEQUENCE [LARGE SCALE GENOMIC DNA]</scope>
</reference>
<protein>
    <recommendedName>
        <fullName evidence="1">Trehalose-6-phosphate synthase</fullName>
        <shortName evidence="1">TPS</shortName>
        <ecNumber evidence="1">2.4.1.15</ecNumber>
    </recommendedName>
    <alternativeName>
        <fullName evidence="1">Alpha,alpha-trehalose-phosphate synthase [UDP-forming]</fullName>
    </alternativeName>
    <alternativeName>
        <fullName evidence="1">Osmoregulatory trehalose synthesis protein A</fullName>
        <shortName evidence="1">OtsA</shortName>
    </alternativeName>
    <alternativeName>
        <fullName evidence="1">UDP-glucose-glucosephosphate glucosyltransferase</fullName>
    </alternativeName>
</protein>
<feature type="chain" id="PRO_0000348898" description="Trehalose-6-phosphate synthase">
    <location>
        <begin position="1"/>
        <end position="474"/>
    </location>
</feature>
<feature type="binding site" evidence="1">
    <location>
        <position position="10"/>
    </location>
    <ligand>
        <name>D-glucose 6-phosphate</name>
        <dbReference type="ChEBI" id="CHEBI:61548"/>
    </ligand>
</feature>
<feature type="binding site" evidence="1">
    <location>
        <begin position="22"/>
        <end position="23"/>
    </location>
    <ligand>
        <name>UDP-alpha-D-glucose</name>
        <dbReference type="ChEBI" id="CHEBI:58885"/>
    </ligand>
</feature>
<feature type="binding site" evidence="1">
    <location>
        <position position="77"/>
    </location>
    <ligand>
        <name>D-glucose 6-phosphate</name>
        <dbReference type="ChEBI" id="CHEBI:61548"/>
    </ligand>
</feature>
<feature type="binding site" evidence="1">
    <location>
        <position position="131"/>
    </location>
    <ligand>
        <name>D-glucose 6-phosphate</name>
        <dbReference type="ChEBI" id="CHEBI:61548"/>
    </ligand>
</feature>
<feature type="binding site" evidence="1">
    <location>
        <position position="263"/>
    </location>
    <ligand>
        <name>UDP-alpha-D-glucose</name>
        <dbReference type="ChEBI" id="CHEBI:58885"/>
    </ligand>
</feature>
<feature type="binding site" evidence="1">
    <location>
        <position position="268"/>
    </location>
    <ligand>
        <name>UDP-alpha-D-glucose</name>
        <dbReference type="ChEBI" id="CHEBI:58885"/>
    </ligand>
</feature>
<feature type="binding site" evidence="1">
    <location>
        <position position="301"/>
    </location>
    <ligand>
        <name>D-glucose 6-phosphate</name>
        <dbReference type="ChEBI" id="CHEBI:61548"/>
    </ligand>
</feature>
<feature type="binding site" evidence="1">
    <location>
        <position position="340"/>
    </location>
    <ligand>
        <name>UDP-alpha-D-glucose</name>
        <dbReference type="ChEBI" id="CHEBI:58885"/>
    </ligand>
</feature>
<feature type="binding site" evidence="1">
    <location>
        <begin position="366"/>
        <end position="370"/>
    </location>
    <ligand>
        <name>UDP-alpha-D-glucose</name>
        <dbReference type="ChEBI" id="CHEBI:58885"/>
    </ligand>
</feature>
<feature type="site" description="Involved in alpha anomer selectivity" evidence="1">
    <location>
        <position position="86"/>
    </location>
</feature>
<feature type="site" description="Involved in alpha anomer selectivity" evidence="1">
    <location>
        <position position="156"/>
    </location>
</feature>
<gene>
    <name evidence="1" type="primary">otsA</name>
    <name type="ordered locus">Ecok1_17490</name>
    <name type="ORF">APECO1_942</name>
</gene>
<proteinExistence type="inferred from homology"/>